<gene>
    <name type="primary">APLF</name>
</gene>
<accession>A0JNH9</accession>
<protein>
    <recommendedName>
        <fullName>Aprataxin and PNK-like factor</fullName>
        <ecNumber evidence="1">3.1.1.-</ecNumber>
    </recommendedName>
    <alternativeName>
        <fullName>Apurinic-apyrimidinic endonuclease APLF</fullName>
    </alternativeName>
</protein>
<proteinExistence type="evidence at transcript level"/>
<dbReference type="EC" id="3.1.1.-" evidence="1"/>
<dbReference type="EMBL" id="BC126691">
    <property type="protein sequence ID" value="AAI26692.1"/>
    <property type="molecule type" value="mRNA"/>
</dbReference>
<dbReference type="RefSeq" id="NP_001071342.1">
    <property type="nucleotide sequence ID" value="NM_001077874.1"/>
</dbReference>
<dbReference type="SMR" id="A0JNH9"/>
<dbReference type="FunCoup" id="A0JNH9">
    <property type="interactions" value="1730"/>
</dbReference>
<dbReference type="STRING" id="9913.ENSBTAP00000055056"/>
<dbReference type="PaxDb" id="9913-ENSBTAP00000055056"/>
<dbReference type="Ensembl" id="ENSBTAT00000044615.3">
    <property type="protein sequence ID" value="ENSBTAP00000042099.2"/>
    <property type="gene ID" value="ENSBTAG00000018401.7"/>
</dbReference>
<dbReference type="GeneID" id="507989"/>
<dbReference type="KEGG" id="bta:507989"/>
<dbReference type="CTD" id="200558"/>
<dbReference type="VEuPathDB" id="HostDB:ENSBTAG00000018401"/>
<dbReference type="VGNC" id="VGNC:59203">
    <property type="gene designation" value="APLF"/>
</dbReference>
<dbReference type="eggNOG" id="ENOG502R7QZ">
    <property type="taxonomic scope" value="Eukaryota"/>
</dbReference>
<dbReference type="GeneTree" id="ENSGT00390000010591"/>
<dbReference type="InParanoid" id="A0JNH9"/>
<dbReference type="OrthoDB" id="10256774at2759"/>
<dbReference type="Proteomes" id="UP000009136">
    <property type="component" value="Chromosome 11"/>
</dbReference>
<dbReference type="Bgee" id="ENSBTAG00000018401">
    <property type="expression patterns" value="Expressed in oocyte and 105 other cell types or tissues"/>
</dbReference>
<dbReference type="GO" id="GO:0005829">
    <property type="term" value="C:cytosol"/>
    <property type="evidence" value="ECO:0007669"/>
    <property type="project" value="UniProtKB-SubCell"/>
</dbReference>
<dbReference type="GO" id="GO:0005634">
    <property type="term" value="C:nucleus"/>
    <property type="evidence" value="ECO:0000250"/>
    <property type="project" value="UniProtKB"/>
</dbReference>
<dbReference type="GO" id="GO:0090734">
    <property type="term" value="C:site of DNA damage"/>
    <property type="evidence" value="ECO:0000250"/>
    <property type="project" value="UniProtKB"/>
</dbReference>
<dbReference type="GO" id="GO:0035861">
    <property type="term" value="C:site of double-strand break"/>
    <property type="evidence" value="ECO:0000250"/>
    <property type="project" value="UniProtKB"/>
</dbReference>
<dbReference type="GO" id="GO:0008408">
    <property type="term" value="F:3'-5' exonuclease activity"/>
    <property type="evidence" value="ECO:0000250"/>
    <property type="project" value="UniProtKB"/>
</dbReference>
<dbReference type="GO" id="GO:0160002">
    <property type="term" value="F:ADP-D-ribose modification-dependent protein binding"/>
    <property type="evidence" value="ECO:0000250"/>
    <property type="project" value="UniProtKB"/>
</dbReference>
<dbReference type="GO" id="GO:0004520">
    <property type="term" value="F:DNA endonuclease activity"/>
    <property type="evidence" value="ECO:0000250"/>
    <property type="project" value="UniProtKB"/>
</dbReference>
<dbReference type="GO" id="GO:0003906">
    <property type="term" value="F:DNA-(apurinic or apyrimidinic site) endonuclease activity"/>
    <property type="evidence" value="ECO:0000250"/>
    <property type="project" value="UniProtKB"/>
</dbReference>
<dbReference type="GO" id="GO:0042393">
    <property type="term" value="F:histone binding"/>
    <property type="evidence" value="ECO:0000250"/>
    <property type="project" value="UniProtKB"/>
</dbReference>
<dbReference type="GO" id="GO:0140713">
    <property type="term" value="F:histone chaperone activity"/>
    <property type="evidence" value="ECO:0000250"/>
    <property type="project" value="UniProtKB"/>
</dbReference>
<dbReference type="GO" id="GO:0000166">
    <property type="term" value="F:nucleotide binding"/>
    <property type="evidence" value="ECO:0000250"/>
    <property type="project" value="UniProtKB"/>
</dbReference>
<dbReference type="GO" id="GO:0072572">
    <property type="term" value="F:poly-ADP-D-ribose binding"/>
    <property type="evidence" value="ECO:0000250"/>
    <property type="project" value="UniProtKB"/>
</dbReference>
<dbReference type="GO" id="GO:0008270">
    <property type="term" value="F:zinc ion binding"/>
    <property type="evidence" value="ECO:0007669"/>
    <property type="project" value="UniProtKB-KW"/>
</dbReference>
<dbReference type="GO" id="GO:0006974">
    <property type="term" value="P:DNA damage response"/>
    <property type="evidence" value="ECO:0000250"/>
    <property type="project" value="UniProtKB"/>
</dbReference>
<dbReference type="GO" id="GO:0140861">
    <property type="term" value="P:DNA repair-dependent chromatin remodeling"/>
    <property type="evidence" value="ECO:0000250"/>
    <property type="project" value="UniProtKB"/>
</dbReference>
<dbReference type="GO" id="GO:0006302">
    <property type="term" value="P:double-strand break repair"/>
    <property type="evidence" value="ECO:0000250"/>
    <property type="project" value="UniProtKB"/>
</dbReference>
<dbReference type="GO" id="GO:0006303">
    <property type="term" value="P:double-strand break repair via nonhomologous end joining"/>
    <property type="evidence" value="ECO:0000250"/>
    <property type="project" value="UniProtKB"/>
</dbReference>
<dbReference type="GO" id="GO:0007566">
    <property type="term" value="P:embryo implantation"/>
    <property type="evidence" value="ECO:0000250"/>
    <property type="project" value="UniProtKB"/>
</dbReference>
<dbReference type="GO" id="GO:0010717">
    <property type="term" value="P:regulation of epithelial to mesenchymal transition"/>
    <property type="evidence" value="ECO:0000250"/>
    <property type="project" value="UniProtKB"/>
</dbReference>
<dbReference type="GO" id="GO:0000012">
    <property type="term" value="P:single strand break repair"/>
    <property type="evidence" value="ECO:0000250"/>
    <property type="project" value="UniProtKB"/>
</dbReference>
<dbReference type="Gene3D" id="2.60.200.20">
    <property type="match status" value="1"/>
</dbReference>
<dbReference type="InterPro" id="IPR039253">
    <property type="entry name" value="APLF"/>
</dbReference>
<dbReference type="InterPro" id="IPR019406">
    <property type="entry name" value="APLF_PBZ"/>
</dbReference>
<dbReference type="InterPro" id="IPR008984">
    <property type="entry name" value="SMAD_FHA_dom_sf"/>
</dbReference>
<dbReference type="PANTHER" id="PTHR21315:SF2">
    <property type="entry name" value="APRATAXIN AND PNK-LIKE FACTOR"/>
    <property type="match status" value="1"/>
</dbReference>
<dbReference type="PANTHER" id="PTHR21315">
    <property type="entry name" value="APRATAXIN AND PNK-LIKE FACTOR-RELATED"/>
    <property type="match status" value="1"/>
</dbReference>
<dbReference type="Pfam" id="PF10283">
    <property type="entry name" value="zf-CCHH"/>
    <property type="match status" value="2"/>
</dbReference>
<dbReference type="SUPFAM" id="SSF49879">
    <property type="entry name" value="SMAD/FHA domain"/>
    <property type="match status" value="1"/>
</dbReference>
<name>APLF_BOVIN</name>
<sequence>MSGGFELQPQDGGPRVALAPGETVIGRGPLLGLHRNPCYYQSSEKSQLLPLKTNIWCWLNPGDHFSLLVDKYIFCVLSTHSEMEMECTLRNSQMLDEDDILNEIPKSSSADLPDKTPSAPRRERSTETAKPQAAANNMSFIGESRDLSKQQPNPSERKRILPAWMLTENSSDQNLSVISGGNNVTWESEKERVCKDKTQVNITQPGKKRLISSGSSESTSAKQDTGKKCKNDDQEESIISSKEMPQSFSAAMLHNTEIDNTKTNPQRSKVPVEALGKVSEHKIITKGSSNEDSTARSCSESYSSTQSKSFCDKPQKSHPEPSSNPPSPECVQAKATDSVPNGSEENKVQRTSCMYGANCYRKNPVHFQHFSHPGDSDYGGVNITCQDEADDRPECPYGASCYRKNPQHKIEYRHSTFPVRSISDEDDNVGQPNEYNLNDSFIDDEEEEYEPTDEDSDWEPEKEDLEKEDMEGLLKEAKKFMKRKK</sequence>
<feature type="chain" id="PRO_0000287355" description="Aprataxin and PNK-like factor">
    <location>
        <begin position="1"/>
        <end position="485"/>
    </location>
</feature>
<feature type="domain" description="FHA-like">
    <location>
        <begin position="1"/>
        <end position="84"/>
    </location>
</feature>
<feature type="zinc finger region" description="PBZ-type 1">
    <location>
        <begin position="351"/>
        <end position="372"/>
    </location>
</feature>
<feature type="zinc finger region" description="PBZ-type 2">
    <location>
        <begin position="393"/>
        <end position="414"/>
    </location>
</feature>
<feature type="region of interest" description="Disordered" evidence="3">
    <location>
        <begin position="103"/>
        <end position="156"/>
    </location>
</feature>
<feature type="region of interest" description="Disordered" evidence="3">
    <location>
        <begin position="206"/>
        <end position="348"/>
    </location>
</feature>
<feature type="region of interest" description="Flexible linker" evidence="1">
    <location>
        <begin position="380"/>
        <end position="390"/>
    </location>
</feature>
<feature type="region of interest" description="Disordered" evidence="3">
    <location>
        <begin position="420"/>
        <end position="470"/>
    </location>
</feature>
<feature type="short sequence motif" description="KBM" evidence="1">
    <location>
        <begin position="157"/>
        <end position="166"/>
    </location>
</feature>
<feature type="short sequence motif" description="NAP1L motif" evidence="1">
    <location>
        <begin position="449"/>
        <end position="473"/>
    </location>
</feature>
<feature type="compositionally biased region" description="Polar residues" evidence="3">
    <location>
        <begin position="212"/>
        <end position="223"/>
    </location>
</feature>
<feature type="compositionally biased region" description="Polar residues" evidence="3">
    <location>
        <begin position="237"/>
        <end position="249"/>
    </location>
</feature>
<feature type="compositionally biased region" description="Polar residues" evidence="3">
    <location>
        <begin position="286"/>
        <end position="309"/>
    </location>
</feature>
<feature type="compositionally biased region" description="Basic and acidic residues" evidence="3">
    <location>
        <begin position="310"/>
        <end position="319"/>
    </location>
</feature>
<feature type="compositionally biased region" description="Acidic residues" evidence="3">
    <location>
        <begin position="441"/>
        <end position="469"/>
    </location>
</feature>
<feature type="binding site" evidence="1">
    <location>
        <position position="350"/>
    </location>
    <ligand>
        <name>a glycoprotein</name>
        <dbReference type="ChEBI" id="CHEBI:17089"/>
    </ligand>
    <ligandPart>
        <name>poly[(1''-&gt;2')-ADP-alpha-D-ribose] group</name>
        <dbReference type="ChEBI" id="CHEBI:157741"/>
    </ligandPart>
</feature>
<feature type="binding site" evidence="1">
    <location>
        <position position="355"/>
    </location>
    <ligand>
        <name>a glycoprotein</name>
        <dbReference type="ChEBI" id="CHEBI:17089"/>
    </ligand>
    <ligandPart>
        <name>poly[(1''-&gt;2')-ADP-alpha-D-ribose] group</name>
        <dbReference type="ChEBI" id="CHEBI:157741"/>
    </ligandPart>
</feature>
<feature type="binding site" evidence="1">
    <location>
        <position position="360"/>
    </location>
    <ligand>
        <name>a glycoprotein</name>
        <dbReference type="ChEBI" id="CHEBI:17089"/>
    </ligand>
    <ligandPart>
        <name>poly[(1''-&gt;2')-ADP-alpha-D-ribose] group</name>
        <dbReference type="ChEBI" id="CHEBI:157741"/>
    </ligandPart>
</feature>
<feature type="binding site" evidence="1">
    <location>
        <position position="361"/>
    </location>
    <ligand>
        <name>a glycoprotein</name>
        <dbReference type="ChEBI" id="CHEBI:17089"/>
    </ligand>
    <ligandPart>
        <name>poly[(1''-&gt;2')-ADP-alpha-D-ribose] group</name>
        <dbReference type="ChEBI" id="CHEBI:157741"/>
    </ligandPart>
</feature>
<feature type="binding site" evidence="1">
    <location>
        <position position="397"/>
    </location>
    <ligand>
        <name>a glycoprotein</name>
        <dbReference type="ChEBI" id="CHEBI:17089"/>
    </ligand>
    <ligandPart>
        <name>poly[(1''-&gt;2')-ADP-alpha-D-ribose] group</name>
        <dbReference type="ChEBI" id="CHEBI:157741"/>
    </ligandPart>
</feature>
<feature type="binding site" evidence="1">
    <location>
        <position position="402"/>
    </location>
    <ligand>
        <name>a glycoprotein</name>
        <dbReference type="ChEBI" id="CHEBI:17089"/>
    </ligand>
    <ligandPart>
        <name>poly[(1''-&gt;2')-ADP-alpha-D-ribose] group</name>
        <dbReference type="ChEBI" id="CHEBI:157741"/>
    </ligandPart>
</feature>
<feature type="binding site" evidence="1">
    <location>
        <position position="403"/>
    </location>
    <ligand>
        <name>a glycoprotein</name>
        <dbReference type="ChEBI" id="CHEBI:17089"/>
    </ligand>
    <ligandPart>
        <name>poly[(1''-&gt;2')-ADP-alpha-D-ribose] group</name>
        <dbReference type="ChEBI" id="CHEBI:157741"/>
    </ligandPart>
</feature>
<feature type="modified residue" description="Phosphoserine; by ATM" evidence="1">
    <location>
        <position position="92"/>
    </location>
</feature>
<feature type="modified residue" description="Phosphoserine" evidence="2">
    <location>
        <position position="125"/>
    </location>
</feature>
<organism>
    <name type="scientific">Bos taurus</name>
    <name type="common">Bovine</name>
    <dbReference type="NCBI Taxonomy" id="9913"/>
    <lineage>
        <taxon>Eukaryota</taxon>
        <taxon>Metazoa</taxon>
        <taxon>Chordata</taxon>
        <taxon>Craniata</taxon>
        <taxon>Vertebrata</taxon>
        <taxon>Euteleostomi</taxon>
        <taxon>Mammalia</taxon>
        <taxon>Eutheria</taxon>
        <taxon>Laurasiatheria</taxon>
        <taxon>Artiodactyla</taxon>
        <taxon>Ruminantia</taxon>
        <taxon>Pecora</taxon>
        <taxon>Bovidae</taxon>
        <taxon>Bovinae</taxon>
        <taxon>Bos</taxon>
    </lineage>
</organism>
<keyword id="KW-0013">ADP-ribosylation</keyword>
<keyword id="KW-0158">Chromosome</keyword>
<keyword id="KW-0175">Coiled coil</keyword>
<keyword id="KW-0963">Cytoplasm</keyword>
<keyword id="KW-0227">DNA damage</keyword>
<keyword id="KW-0234">DNA repair</keyword>
<keyword id="KW-0378">Hydrolase</keyword>
<keyword id="KW-0479">Metal-binding</keyword>
<keyword id="KW-0547">Nucleotide-binding</keyword>
<keyword id="KW-0539">Nucleus</keyword>
<keyword id="KW-0597">Phosphoprotein</keyword>
<keyword id="KW-1185">Reference proteome</keyword>
<keyword id="KW-0677">Repeat</keyword>
<keyword id="KW-0862">Zinc</keyword>
<keyword id="KW-0863">Zinc-finger</keyword>
<reference key="1">
    <citation type="submission" date="2006-10" db="EMBL/GenBank/DDBJ databases">
        <authorList>
            <consortium name="NIH - Mammalian Gene Collection (MGC) project"/>
        </authorList>
    </citation>
    <scope>NUCLEOTIDE SEQUENCE [LARGE SCALE MRNA]</scope>
    <source>
        <strain>Hereford</strain>
        <tissue>Hypothalamus</tissue>
    </source>
</reference>
<evidence type="ECO:0000250" key="1">
    <source>
        <dbReference type="UniProtKB" id="Q8IW19"/>
    </source>
</evidence>
<evidence type="ECO:0000250" key="2">
    <source>
        <dbReference type="UniProtKB" id="Q9D842"/>
    </source>
</evidence>
<evidence type="ECO:0000256" key="3">
    <source>
        <dbReference type="SAM" id="MobiDB-lite"/>
    </source>
</evidence>
<evidence type="ECO:0000305" key="4"/>
<comment type="function">
    <text evidence="1 2">Histone chaperone involved in single-strand and double-strand DNA break repair. Recruited to sites of DNA damage through interaction with branched poly-ADP-ribose chains, a polymeric post-translational modification synthesized transiently at sites of chromosomal damage to accelerate DNA strand break repair reactions (By similarity). Following recruitment to DNA damage sites, acts as a histone chaperone that mediates histone eviction during DNA repair and promotes recruitment of histone variant MACROH2A1 (By similarity). Also has a nuclease activity: displays apurinic-apyrimidinic (AP) endonuclease and 3'-5' exonuclease activities in vitro. Also able to introduce nicks at hydroxyuracil and other types of pyrimidine base damage (By similarity). Together with PARP3, promotes the retention of the LIG4-XRCC4 complex on chromatin and accelerate DNA ligation during non-homologous end-joining (NHEJ). Also acts as a negative regulator of cell pluripotency by promoting histone exchange. Required for the embryo implantation during the epithelial to mesenchymal transition in females (By similarity).</text>
</comment>
<comment type="subunit">
    <text evidence="1">Interacts with LIG4. Interacts with PARP1. Interacts with XRCC4. Interacts (via KBM motif) with XRCC5 and XRCC6; promoting recruitment to DNA damage sites. Interacts with XRCC1. Interacts (via C-terminal disordered region) with histones; interacts with histone H2A, H2B and H3-H4.</text>
</comment>
<comment type="subcellular location">
    <subcellularLocation>
        <location evidence="2">Nucleus</location>
    </subcellularLocation>
    <subcellularLocation>
        <location evidence="1">Chromosome</location>
    </subcellularLocation>
    <subcellularLocation>
        <location evidence="2">Cytoplasm</location>
        <location evidence="2">Cytosol</location>
    </subcellularLocation>
    <text evidence="1">Localizes to DNA damage sites. Accumulates at single-strand breaks and double-strand breaks via the PBZ-type zinc fingers.</text>
</comment>
<comment type="domain">
    <text evidence="1">The PBZ-type zinc fingers (also named CYR) mediate non-covalent poly-ADP-ribose-binding. Specifically recognizes branched poly-ADP-ribose chains generated by PARP2. Poly-ADP-ribose-binding is dependent on the presence of zinc and promotes its recruitment to DNA damage sites.</text>
</comment>
<comment type="domain">
    <text evidence="1">The KBM (Ku-binding motif) mediates interaction with XRCC5/Ku80 and XRCC6/Ku70 and recruitment to DNA damage sites.</text>
</comment>
<comment type="domain">
    <text evidence="1">The FHA-like domain mediates interaction with XRCC1 and XRCC4.</text>
</comment>
<comment type="domain">
    <text evidence="1">The NAP1L motif is required for the histone chaperone activity.</text>
</comment>
<comment type="PTM">
    <text evidence="1">Poly-ADP-ribosylated. In addition to binding non covalently poly-ADP-ribose via its PBZ-type zinc fingers, the protein is also covalently poly-ADP-ribosylated by PARP1.</text>
</comment>
<comment type="PTM">
    <text evidence="1">Phosphorylated in an ATM-dependent manner upon double-strand DNA break.</text>
</comment>
<comment type="similarity">
    <text evidence="4">Belongs to the APLF family.</text>
</comment>